<organism>
    <name type="scientific">Lactobacillus acidophilus (strain ATCC 700396 / NCK56 / N2 / NCFM)</name>
    <dbReference type="NCBI Taxonomy" id="272621"/>
    <lineage>
        <taxon>Bacteria</taxon>
        <taxon>Bacillati</taxon>
        <taxon>Bacillota</taxon>
        <taxon>Bacilli</taxon>
        <taxon>Lactobacillales</taxon>
        <taxon>Lactobacillaceae</taxon>
        <taxon>Lactobacillus</taxon>
    </lineage>
</organism>
<comment type="function">
    <text evidence="1">Plays an important role in the de novo pathway of purine nucleotide biosynthesis. Catalyzes the first committed step in the biosynthesis of AMP from IMP.</text>
</comment>
<comment type="catalytic activity">
    <reaction evidence="1">
        <text>IMP + L-aspartate + GTP = N(6)-(1,2-dicarboxyethyl)-AMP + GDP + phosphate + 2 H(+)</text>
        <dbReference type="Rhea" id="RHEA:15753"/>
        <dbReference type="ChEBI" id="CHEBI:15378"/>
        <dbReference type="ChEBI" id="CHEBI:29991"/>
        <dbReference type="ChEBI" id="CHEBI:37565"/>
        <dbReference type="ChEBI" id="CHEBI:43474"/>
        <dbReference type="ChEBI" id="CHEBI:57567"/>
        <dbReference type="ChEBI" id="CHEBI:58053"/>
        <dbReference type="ChEBI" id="CHEBI:58189"/>
        <dbReference type="EC" id="6.3.4.4"/>
    </reaction>
</comment>
<comment type="cofactor">
    <cofactor evidence="1">
        <name>Mg(2+)</name>
        <dbReference type="ChEBI" id="CHEBI:18420"/>
    </cofactor>
    <text evidence="1">Binds 1 Mg(2+) ion per subunit.</text>
</comment>
<comment type="pathway">
    <text evidence="1">Purine metabolism; AMP biosynthesis via de novo pathway; AMP from IMP: step 1/2.</text>
</comment>
<comment type="subunit">
    <text evidence="1">Homodimer.</text>
</comment>
<comment type="subcellular location">
    <subcellularLocation>
        <location evidence="1">Cytoplasm</location>
    </subcellularLocation>
</comment>
<comment type="similarity">
    <text evidence="1">Belongs to the adenylosuccinate synthetase family.</text>
</comment>
<reference key="1">
    <citation type="journal article" date="2005" name="Proc. Natl. Acad. Sci. U.S.A.">
        <title>Complete genome sequence of the probiotic lactic acid bacterium Lactobacillus acidophilus NCFM.</title>
        <authorList>
            <person name="Altermann E."/>
            <person name="Russell W.M."/>
            <person name="Azcarate-Peril M.A."/>
            <person name="Barrangou R."/>
            <person name="Buck B.L."/>
            <person name="McAuliffe O."/>
            <person name="Souther N."/>
            <person name="Dobson A."/>
            <person name="Duong T."/>
            <person name="Callanan M."/>
            <person name="Lick S."/>
            <person name="Hamrick A."/>
            <person name="Cano R."/>
            <person name="Klaenhammer T.R."/>
        </authorList>
    </citation>
    <scope>NUCLEOTIDE SEQUENCE [LARGE SCALE GENOMIC DNA]</scope>
    <source>
        <strain>ATCC 700396 / NCK56 / N2 / NCFM</strain>
    </source>
</reference>
<gene>
    <name evidence="1" type="primary">purA</name>
    <name type="ordered locus">LBA1892</name>
</gene>
<evidence type="ECO:0000255" key="1">
    <source>
        <dbReference type="HAMAP-Rule" id="MF_00011"/>
    </source>
</evidence>
<keyword id="KW-0963">Cytoplasm</keyword>
<keyword id="KW-0342">GTP-binding</keyword>
<keyword id="KW-0436">Ligase</keyword>
<keyword id="KW-0460">Magnesium</keyword>
<keyword id="KW-0479">Metal-binding</keyword>
<keyword id="KW-0547">Nucleotide-binding</keyword>
<keyword id="KW-0658">Purine biosynthesis</keyword>
<keyword id="KW-1185">Reference proteome</keyword>
<protein>
    <recommendedName>
        <fullName evidence="1">Adenylosuccinate synthetase</fullName>
        <shortName evidence="1">AMPSase</shortName>
        <shortName evidence="1">AdSS</shortName>
        <ecNumber evidence="1">6.3.4.4</ecNumber>
    </recommendedName>
    <alternativeName>
        <fullName evidence="1">IMP--aspartate ligase</fullName>
    </alternativeName>
</protein>
<name>PURA_LACAC</name>
<feature type="chain" id="PRO_0000224286" description="Adenylosuccinate synthetase">
    <location>
        <begin position="1"/>
        <end position="429"/>
    </location>
</feature>
<feature type="active site" description="Proton acceptor" evidence="1">
    <location>
        <position position="13"/>
    </location>
</feature>
<feature type="active site" description="Proton donor" evidence="1">
    <location>
        <position position="41"/>
    </location>
</feature>
<feature type="binding site" evidence="1">
    <location>
        <begin position="12"/>
        <end position="18"/>
    </location>
    <ligand>
        <name>GTP</name>
        <dbReference type="ChEBI" id="CHEBI:37565"/>
    </ligand>
</feature>
<feature type="binding site" description="in other chain" evidence="1">
    <location>
        <begin position="13"/>
        <end position="16"/>
    </location>
    <ligand>
        <name>IMP</name>
        <dbReference type="ChEBI" id="CHEBI:58053"/>
        <note>ligand shared between dimeric partners</note>
    </ligand>
</feature>
<feature type="binding site" evidence="1">
    <location>
        <position position="13"/>
    </location>
    <ligand>
        <name>Mg(2+)</name>
        <dbReference type="ChEBI" id="CHEBI:18420"/>
    </ligand>
</feature>
<feature type="binding site" description="in other chain" evidence="1">
    <location>
        <begin position="38"/>
        <end position="41"/>
    </location>
    <ligand>
        <name>IMP</name>
        <dbReference type="ChEBI" id="CHEBI:58053"/>
        <note>ligand shared between dimeric partners</note>
    </ligand>
</feature>
<feature type="binding site" evidence="1">
    <location>
        <begin position="40"/>
        <end position="42"/>
    </location>
    <ligand>
        <name>GTP</name>
        <dbReference type="ChEBI" id="CHEBI:37565"/>
    </ligand>
</feature>
<feature type="binding site" evidence="1">
    <location>
        <position position="40"/>
    </location>
    <ligand>
        <name>Mg(2+)</name>
        <dbReference type="ChEBI" id="CHEBI:18420"/>
    </ligand>
</feature>
<feature type="binding site" description="in other chain" evidence="1">
    <location>
        <position position="128"/>
    </location>
    <ligand>
        <name>IMP</name>
        <dbReference type="ChEBI" id="CHEBI:58053"/>
        <note>ligand shared between dimeric partners</note>
    </ligand>
</feature>
<feature type="binding site" evidence="1">
    <location>
        <position position="142"/>
    </location>
    <ligand>
        <name>IMP</name>
        <dbReference type="ChEBI" id="CHEBI:58053"/>
        <note>ligand shared between dimeric partners</note>
    </ligand>
</feature>
<feature type="binding site" description="in other chain" evidence="1">
    <location>
        <position position="223"/>
    </location>
    <ligand>
        <name>IMP</name>
        <dbReference type="ChEBI" id="CHEBI:58053"/>
        <note>ligand shared between dimeric partners</note>
    </ligand>
</feature>
<feature type="binding site" description="in other chain" evidence="1">
    <location>
        <position position="238"/>
    </location>
    <ligand>
        <name>IMP</name>
        <dbReference type="ChEBI" id="CHEBI:58053"/>
        <note>ligand shared between dimeric partners</note>
    </ligand>
</feature>
<feature type="binding site" evidence="1">
    <location>
        <begin position="298"/>
        <end position="304"/>
    </location>
    <ligand>
        <name>substrate</name>
    </ligand>
</feature>
<feature type="binding site" description="in other chain" evidence="1">
    <location>
        <position position="302"/>
    </location>
    <ligand>
        <name>IMP</name>
        <dbReference type="ChEBI" id="CHEBI:58053"/>
        <note>ligand shared between dimeric partners</note>
    </ligand>
</feature>
<feature type="binding site" evidence="1">
    <location>
        <position position="304"/>
    </location>
    <ligand>
        <name>GTP</name>
        <dbReference type="ChEBI" id="CHEBI:37565"/>
    </ligand>
</feature>
<feature type="binding site" evidence="1">
    <location>
        <begin position="330"/>
        <end position="332"/>
    </location>
    <ligand>
        <name>GTP</name>
        <dbReference type="ChEBI" id="CHEBI:37565"/>
    </ligand>
</feature>
<feature type="binding site" evidence="1">
    <location>
        <begin position="412"/>
        <end position="414"/>
    </location>
    <ligand>
        <name>GTP</name>
        <dbReference type="ChEBI" id="CHEBI:37565"/>
    </ligand>
</feature>
<sequence>MTAVAVVGSQWGDEGKGKITDFLSKDAAMAVRSNGGNNAGHTIDIDGKTFKMRLIPSGIFAAKDNTVIGNGVVINPEVMFSELENLEKNGIDTSGLRISNRAHIIMPYDIKQDEYQEEAKGKNKIGTTKNGIGPTYMDKASRIGIRVCDLLEKDTFEEKLRTNLEIKNELFTKVYGKPALKFEDIFDKYYEYGQRMKKYVTDTSVLVNDALDQNKKVLFEGAQGIMLDIDEGTYPFVTSSNTISGGIASGIGIGANRLDTVIGVCKAYTTRVGAGPFPTELLDETGDRIREIAHEYGTVTGRPRRVGWFDSVALRHSKRVAGINGLSLNLLDVFSGFDKIKICTAYELDGEKIDYYPASLKELYRCKPVYEELPAWEEDITQVKTWDELPENAKKFLNRISELVGVPLVTVSVGPDREQTIVLKNPWEM</sequence>
<proteinExistence type="inferred from homology"/>
<dbReference type="EC" id="6.3.4.4" evidence="1"/>
<dbReference type="EMBL" id="CP000033">
    <property type="protein sequence ID" value="AAV43690.1"/>
    <property type="molecule type" value="Genomic_DNA"/>
</dbReference>
<dbReference type="RefSeq" id="WP_003549585.1">
    <property type="nucleotide sequence ID" value="NC_006814.3"/>
</dbReference>
<dbReference type="RefSeq" id="YP_194721.1">
    <property type="nucleotide sequence ID" value="NC_006814.3"/>
</dbReference>
<dbReference type="SMR" id="Q5FHY4"/>
<dbReference type="STRING" id="272621.LBA1892"/>
<dbReference type="KEGG" id="lac:LBA1892"/>
<dbReference type="PATRIC" id="fig|272621.13.peg.1798"/>
<dbReference type="eggNOG" id="COG0104">
    <property type="taxonomic scope" value="Bacteria"/>
</dbReference>
<dbReference type="HOGENOM" id="CLU_029848_0_0_9"/>
<dbReference type="OrthoDB" id="9807553at2"/>
<dbReference type="BioCyc" id="LACI272621:G1G49-1844-MONOMER"/>
<dbReference type="UniPathway" id="UPA00075">
    <property type="reaction ID" value="UER00335"/>
</dbReference>
<dbReference type="Proteomes" id="UP000006381">
    <property type="component" value="Chromosome"/>
</dbReference>
<dbReference type="GO" id="GO:0005737">
    <property type="term" value="C:cytoplasm"/>
    <property type="evidence" value="ECO:0007669"/>
    <property type="project" value="UniProtKB-SubCell"/>
</dbReference>
<dbReference type="GO" id="GO:0004019">
    <property type="term" value="F:adenylosuccinate synthase activity"/>
    <property type="evidence" value="ECO:0007669"/>
    <property type="project" value="UniProtKB-UniRule"/>
</dbReference>
<dbReference type="GO" id="GO:0005525">
    <property type="term" value="F:GTP binding"/>
    <property type="evidence" value="ECO:0007669"/>
    <property type="project" value="UniProtKB-UniRule"/>
</dbReference>
<dbReference type="GO" id="GO:0000287">
    <property type="term" value="F:magnesium ion binding"/>
    <property type="evidence" value="ECO:0007669"/>
    <property type="project" value="UniProtKB-UniRule"/>
</dbReference>
<dbReference type="GO" id="GO:0044208">
    <property type="term" value="P:'de novo' AMP biosynthetic process"/>
    <property type="evidence" value="ECO:0007669"/>
    <property type="project" value="UniProtKB-UniRule"/>
</dbReference>
<dbReference type="GO" id="GO:0046040">
    <property type="term" value="P:IMP metabolic process"/>
    <property type="evidence" value="ECO:0007669"/>
    <property type="project" value="TreeGrafter"/>
</dbReference>
<dbReference type="CDD" id="cd03108">
    <property type="entry name" value="AdSS"/>
    <property type="match status" value="1"/>
</dbReference>
<dbReference type="FunFam" id="1.10.300.10:FF:000001">
    <property type="entry name" value="Adenylosuccinate synthetase"/>
    <property type="match status" value="1"/>
</dbReference>
<dbReference type="FunFam" id="3.90.170.10:FF:000001">
    <property type="entry name" value="Adenylosuccinate synthetase"/>
    <property type="match status" value="1"/>
</dbReference>
<dbReference type="Gene3D" id="3.40.440.10">
    <property type="entry name" value="Adenylosuccinate Synthetase, subunit A, domain 1"/>
    <property type="match status" value="1"/>
</dbReference>
<dbReference type="Gene3D" id="1.10.300.10">
    <property type="entry name" value="Adenylosuccinate Synthetase, subunit A, domain 2"/>
    <property type="match status" value="1"/>
</dbReference>
<dbReference type="Gene3D" id="3.90.170.10">
    <property type="entry name" value="Adenylosuccinate Synthetase, subunit A, domain 3"/>
    <property type="match status" value="1"/>
</dbReference>
<dbReference type="HAMAP" id="MF_00011">
    <property type="entry name" value="Adenylosucc_synth"/>
    <property type="match status" value="1"/>
</dbReference>
<dbReference type="InterPro" id="IPR018220">
    <property type="entry name" value="Adenylosuccin_syn_GTP-bd"/>
</dbReference>
<dbReference type="InterPro" id="IPR033128">
    <property type="entry name" value="Adenylosuccin_syn_Lys_AS"/>
</dbReference>
<dbReference type="InterPro" id="IPR042109">
    <property type="entry name" value="Adenylosuccinate_synth_dom1"/>
</dbReference>
<dbReference type="InterPro" id="IPR042110">
    <property type="entry name" value="Adenylosuccinate_synth_dom2"/>
</dbReference>
<dbReference type="InterPro" id="IPR042111">
    <property type="entry name" value="Adenylosuccinate_synth_dom3"/>
</dbReference>
<dbReference type="InterPro" id="IPR001114">
    <property type="entry name" value="Adenylosuccinate_synthetase"/>
</dbReference>
<dbReference type="InterPro" id="IPR027417">
    <property type="entry name" value="P-loop_NTPase"/>
</dbReference>
<dbReference type="NCBIfam" id="NF002223">
    <property type="entry name" value="PRK01117.1"/>
    <property type="match status" value="1"/>
</dbReference>
<dbReference type="NCBIfam" id="TIGR00184">
    <property type="entry name" value="purA"/>
    <property type="match status" value="1"/>
</dbReference>
<dbReference type="PANTHER" id="PTHR11846">
    <property type="entry name" value="ADENYLOSUCCINATE SYNTHETASE"/>
    <property type="match status" value="1"/>
</dbReference>
<dbReference type="PANTHER" id="PTHR11846:SF0">
    <property type="entry name" value="ADENYLOSUCCINATE SYNTHETASE"/>
    <property type="match status" value="1"/>
</dbReference>
<dbReference type="Pfam" id="PF00709">
    <property type="entry name" value="Adenylsucc_synt"/>
    <property type="match status" value="1"/>
</dbReference>
<dbReference type="SMART" id="SM00788">
    <property type="entry name" value="Adenylsucc_synt"/>
    <property type="match status" value="1"/>
</dbReference>
<dbReference type="SUPFAM" id="SSF52540">
    <property type="entry name" value="P-loop containing nucleoside triphosphate hydrolases"/>
    <property type="match status" value="1"/>
</dbReference>
<dbReference type="PROSITE" id="PS01266">
    <property type="entry name" value="ADENYLOSUCCIN_SYN_1"/>
    <property type="match status" value="1"/>
</dbReference>
<dbReference type="PROSITE" id="PS00513">
    <property type="entry name" value="ADENYLOSUCCIN_SYN_2"/>
    <property type="match status" value="1"/>
</dbReference>
<accession>Q5FHY4</accession>